<proteinExistence type="inferred from homology"/>
<sequence length="91" mass="10295">MYVVVAYDITEDEVRNKVADALKAYGLERIQRSVFVGRINPALLKDLVERLKRITKGANADITIFKVDRRAIDTAIRIGPPPPARKNVDLY</sequence>
<comment type="function">
    <text evidence="1">CRISPR (clustered regularly interspaced short palindromic repeat), is an adaptive immune system that provides protection against mobile genetic elements (viruses, transposable elements and conjugative plasmids). CRISPR clusters contain sequences complementary to antecedent mobile elements and target invading nucleic acids. CRISPR clusters are transcribed and processed into CRISPR RNA (crRNA). Functions as a ssRNA-specific endoribonuclease. Involved in the integration of spacer DNA into the CRISPR cassette.</text>
</comment>
<comment type="cofactor">
    <cofactor evidence="1">
        <name>Mg(2+)</name>
        <dbReference type="ChEBI" id="CHEBI:18420"/>
    </cofactor>
</comment>
<comment type="subunit">
    <text evidence="1">Homodimer, forms a heterotetramer with a Cas1 homodimer.</text>
</comment>
<comment type="similarity">
    <text evidence="1">Belongs to the CRISPR-associated endoribonuclease Cas2 protein family.</text>
</comment>
<reference key="1">
    <citation type="journal article" date="2002" name="Proc. Natl. Acad. Sci. U.S.A.">
        <title>Genome sequence of the hyperthermophilic crenarchaeon Pyrobaculum aerophilum.</title>
        <authorList>
            <person name="Fitz-Gibbon S.T."/>
            <person name="Ladner H."/>
            <person name="Kim U.-J."/>
            <person name="Stetter K.O."/>
            <person name="Simon M.I."/>
            <person name="Miller J.H."/>
        </authorList>
    </citation>
    <scope>NUCLEOTIDE SEQUENCE [LARGE SCALE GENOMIC DNA]</scope>
    <source>
        <strain>ATCC 51768 / DSM 7523 / JCM 9630 / CIP 104966 / NBRC 100827 / IM2</strain>
    </source>
</reference>
<dbReference type="EC" id="3.1.-.-" evidence="1"/>
<dbReference type="EMBL" id="AE009441">
    <property type="protein sequence ID" value="AAL62620.1"/>
    <property type="molecule type" value="Genomic_DNA"/>
</dbReference>
<dbReference type="RefSeq" id="WP_011007092.1">
    <property type="nucleotide sequence ID" value="NC_003364.1"/>
</dbReference>
<dbReference type="SMR" id="Q8ZZL9"/>
<dbReference type="STRING" id="178306.PAE0199"/>
<dbReference type="EnsemblBacteria" id="AAL62620">
    <property type="protein sequence ID" value="AAL62620"/>
    <property type="gene ID" value="PAE0199"/>
</dbReference>
<dbReference type="GeneID" id="1464838"/>
<dbReference type="KEGG" id="pai:PAE0199"/>
<dbReference type="PATRIC" id="fig|178306.9.peg.142"/>
<dbReference type="eggNOG" id="arCOG04194">
    <property type="taxonomic scope" value="Archaea"/>
</dbReference>
<dbReference type="HOGENOM" id="CLU_161124_2_3_2"/>
<dbReference type="InParanoid" id="Q8ZZL9"/>
<dbReference type="Proteomes" id="UP000002439">
    <property type="component" value="Chromosome"/>
</dbReference>
<dbReference type="GO" id="GO:0046872">
    <property type="term" value="F:metal ion binding"/>
    <property type="evidence" value="ECO:0007669"/>
    <property type="project" value="UniProtKB-UniRule"/>
</dbReference>
<dbReference type="GO" id="GO:0004521">
    <property type="term" value="F:RNA endonuclease activity"/>
    <property type="evidence" value="ECO:0007669"/>
    <property type="project" value="InterPro"/>
</dbReference>
<dbReference type="GO" id="GO:0051607">
    <property type="term" value="P:defense response to virus"/>
    <property type="evidence" value="ECO:0007669"/>
    <property type="project" value="UniProtKB-UniRule"/>
</dbReference>
<dbReference type="GO" id="GO:0043571">
    <property type="term" value="P:maintenance of CRISPR repeat elements"/>
    <property type="evidence" value="ECO:0007669"/>
    <property type="project" value="UniProtKB-UniRule"/>
</dbReference>
<dbReference type="CDD" id="cd09638">
    <property type="entry name" value="Cas2_I_II_III"/>
    <property type="match status" value="1"/>
</dbReference>
<dbReference type="Gene3D" id="3.30.70.240">
    <property type="match status" value="1"/>
</dbReference>
<dbReference type="HAMAP" id="MF_01471">
    <property type="entry name" value="Cas2"/>
    <property type="match status" value="1"/>
</dbReference>
<dbReference type="InterPro" id="IPR021127">
    <property type="entry name" value="CRISPR_associated_Cas2"/>
</dbReference>
<dbReference type="InterPro" id="IPR019199">
    <property type="entry name" value="Virulence_VapD/CRISPR_Cas2"/>
</dbReference>
<dbReference type="NCBIfam" id="TIGR01573">
    <property type="entry name" value="cas2"/>
    <property type="match status" value="1"/>
</dbReference>
<dbReference type="PANTHER" id="PTHR34405">
    <property type="entry name" value="CRISPR-ASSOCIATED ENDORIBONUCLEASE CAS2"/>
    <property type="match status" value="1"/>
</dbReference>
<dbReference type="PANTHER" id="PTHR34405:SF3">
    <property type="entry name" value="CRISPR-ASSOCIATED ENDORIBONUCLEASE CAS2 3"/>
    <property type="match status" value="1"/>
</dbReference>
<dbReference type="Pfam" id="PF09827">
    <property type="entry name" value="CRISPR_Cas2"/>
    <property type="match status" value="1"/>
</dbReference>
<dbReference type="SUPFAM" id="SSF143430">
    <property type="entry name" value="TTP0101/SSO1404-like"/>
    <property type="match status" value="1"/>
</dbReference>
<feature type="chain" id="PRO_0000417750" description="CRISPR-associated endoribonuclease Cas2 2">
    <location>
        <begin position="1"/>
        <end position="91"/>
    </location>
</feature>
<feature type="binding site" evidence="1">
    <location>
        <position position="8"/>
    </location>
    <ligand>
        <name>Mg(2+)</name>
        <dbReference type="ChEBI" id="CHEBI:18420"/>
        <note>catalytic</note>
    </ligand>
</feature>
<organism>
    <name type="scientific">Pyrobaculum aerophilum (strain ATCC 51768 / DSM 7523 / JCM 9630 / CIP 104966 / NBRC 100827 / IM2)</name>
    <dbReference type="NCBI Taxonomy" id="178306"/>
    <lineage>
        <taxon>Archaea</taxon>
        <taxon>Thermoproteota</taxon>
        <taxon>Thermoprotei</taxon>
        <taxon>Thermoproteales</taxon>
        <taxon>Thermoproteaceae</taxon>
        <taxon>Pyrobaculum</taxon>
    </lineage>
</organism>
<evidence type="ECO:0000255" key="1">
    <source>
        <dbReference type="HAMAP-Rule" id="MF_01471"/>
    </source>
</evidence>
<gene>
    <name evidence="1" type="primary">cas2-2</name>
    <name type="ordered locus">PAE0199</name>
</gene>
<accession>Q8ZZL9</accession>
<keyword id="KW-0051">Antiviral defense</keyword>
<keyword id="KW-0255">Endonuclease</keyword>
<keyword id="KW-0378">Hydrolase</keyword>
<keyword id="KW-0460">Magnesium</keyword>
<keyword id="KW-0479">Metal-binding</keyword>
<keyword id="KW-0540">Nuclease</keyword>
<keyword id="KW-1185">Reference proteome</keyword>
<name>CAS2B_PYRAE</name>
<protein>
    <recommendedName>
        <fullName evidence="1">CRISPR-associated endoribonuclease Cas2 2</fullName>
        <ecNumber evidence="1">3.1.-.-</ecNumber>
    </recommendedName>
</protein>